<sequence length="183" mass="20716">MQHTNAPLWRPQSELTPLPDTSTLDWLFDEGSLTRRLTHLSDDGFSVTPLFEGWQTLRDDECAALDLAEGSEGWVREVYLRGHGQAWVFARSVASRSALQGDGLHMDELGSRSLGELLFCDHAFQRRAIEVCHYPEHWLPEGSRAAGLWGRRSRFDRGALSVLVAEIFLPTLWEAVRARPENC</sequence>
<feature type="chain" id="PRO_0000240558" description="Probable chorismate pyruvate-lyase 2">
    <location>
        <begin position="1"/>
        <end position="183"/>
    </location>
</feature>
<feature type="binding site" evidence="1">
    <location>
        <position position="76"/>
    </location>
    <ligand>
        <name>substrate</name>
    </ligand>
</feature>
<feature type="binding site" evidence="1">
    <location>
        <position position="114"/>
    </location>
    <ligand>
        <name>substrate</name>
    </ligand>
</feature>
<feature type="binding site" evidence="1">
    <location>
        <position position="166"/>
    </location>
    <ligand>
        <name>substrate</name>
    </ligand>
</feature>
<comment type="function">
    <text evidence="1">Removes the pyruvyl group from chorismate, with concomitant aromatization of the ring, to provide 4-hydroxybenzoate (4HB) for the ubiquinone pathway.</text>
</comment>
<comment type="catalytic activity">
    <reaction evidence="1">
        <text>chorismate = 4-hydroxybenzoate + pyruvate</text>
        <dbReference type="Rhea" id="RHEA:16505"/>
        <dbReference type="ChEBI" id="CHEBI:15361"/>
        <dbReference type="ChEBI" id="CHEBI:17879"/>
        <dbReference type="ChEBI" id="CHEBI:29748"/>
        <dbReference type="EC" id="4.1.3.40"/>
    </reaction>
</comment>
<comment type="pathway">
    <text evidence="1">Cofactor biosynthesis; ubiquinone biosynthesis.</text>
</comment>
<comment type="subcellular location">
    <subcellularLocation>
        <location evidence="1">Cytoplasm</location>
    </subcellularLocation>
</comment>
<comment type="similarity">
    <text evidence="1">Belongs to the UbiC family.</text>
</comment>
<keyword id="KW-0963">Cytoplasm</keyword>
<keyword id="KW-0456">Lyase</keyword>
<keyword id="KW-0670">Pyruvate</keyword>
<keyword id="KW-0831">Ubiquinone biosynthesis</keyword>
<name>UBIC2_PSEPF</name>
<dbReference type="EC" id="4.1.3.40" evidence="1"/>
<dbReference type="EMBL" id="CP000094">
    <property type="protein sequence ID" value="ABA77340.1"/>
    <property type="molecule type" value="Genomic_DNA"/>
</dbReference>
<dbReference type="RefSeq" id="WP_011336606.1">
    <property type="nucleotide sequence ID" value="NC_007492.2"/>
</dbReference>
<dbReference type="SMR" id="Q3K4G4"/>
<dbReference type="KEGG" id="pfo:Pfl01_5603"/>
<dbReference type="eggNOG" id="COG3161">
    <property type="taxonomic scope" value="Bacteria"/>
</dbReference>
<dbReference type="HOGENOM" id="CLU_096824_3_0_6"/>
<dbReference type="UniPathway" id="UPA00232"/>
<dbReference type="Proteomes" id="UP000002704">
    <property type="component" value="Chromosome"/>
</dbReference>
<dbReference type="GO" id="GO:0005829">
    <property type="term" value="C:cytosol"/>
    <property type="evidence" value="ECO:0007669"/>
    <property type="project" value="TreeGrafter"/>
</dbReference>
<dbReference type="GO" id="GO:0008813">
    <property type="term" value="F:chorismate lyase activity"/>
    <property type="evidence" value="ECO:0007669"/>
    <property type="project" value="UniProtKB-UniRule"/>
</dbReference>
<dbReference type="GO" id="GO:0042866">
    <property type="term" value="P:pyruvate biosynthetic process"/>
    <property type="evidence" value="ECO:0007669"/>
    <property type="project" value="UniProtKB-UniRule"/>
</dbReference>
<dbReference type="GO" id="GO:0006744">
    <property type="term" value="P:ubiquinone biosynthetic process"/>
    <property type="evidence" value="ECO:0007669"/>
    <property type="project" value="UniProtKB-UniRule"/>
</dbReference>
<dbReference type="Gene3D" id="3.40.1410.10">
    <property type="entry name" value="Chorismate lyase-like"/>
    <property type="match status" value="1"/>
</dbReference>
<dbReference type="HAMAP" id="MF_01632">
    <property type="entry name" value="UbiC"/>
    <property type="match status" value="1"/>
</dbReference>
<dbReference type="InterPro" id="IPR007440">
    <property type="entry name" value="Chorismate--pyruvate_lyase"/>
</dbReference>
<dbReference type="InterPro" id="IPR028978">
    <property type="entry name" value="Chorismate_lyase_/UTRA_dom_sf"/>
</dbReference>
<dbReference type="PANTHER" id="PTHR38683">
    <property type="entry name" value="CHORISMATE PYRUVATE-LYASE"/>
    <property type="match status" value="1"/>
</dbReference>
<dbReference type="PANTHER" id="PTHR38683:SF1">
    <property type="entry name" value="CHORISMATE PYRUVATE-LYASE"/>
    <property type="match status" value="1"/>
</dbReference>
<dbReference type="Pfam" id="PF04345">
    <property type="entry name" value="Chor_lyase"/>
    <property type="match status" value="1"/>
</dbReference>
<dbReference type="SUPFAM" id="SSF64288">
    <property type="entry name" value="Chorismate lyase-like"/>
    <property type="match status" value="1"/>
</dbReference>
<reference key="1">
    <citation type="journal article" date="2009" name="Genome Biol.">
        <title>Genomic and genetic analyses of diversity and plant interactions of Pseudomonas fluorescens.</title>
        <authorList>
            <person name="Silby M.W."/>
            <person name="Cerdeno-Tarraga A.M."/>
            <person name="Vernikos G.S."/>
            <person name="Giddens S.R."/>
            <person name="Jackson R.W."/>
            <person name="Preston G.M."/>
            <person name="Zhang X.-X."/>
            <person name="Moon C.D."/>
            <person name="Gehrig S.M."/>
            <person name="Godfrey S.A.C."/>
            <person name="Knight C.G."/>
            <person name="Malone J.G."/>
            <person name="Robinson Z."/>
            <person name="Spiers A.J."/>
            <person name="Harris S."/>
            <person name="Challis G.L."/>
            <person name="Yaxley A.M."/>
            <person name="Harris D."/>
            <person name="Seeger K."/>
            <person name="Murphy L."/>
            <person name="Rutter S."/>
            <person name="Squares R."/>
            <person name="Quail M.A."/>
            <person name="Saunders E."/>
            <person name="Mavromatis K."/>
            <person name="Brettin T.S."/>
            <person name="Bentley S.D."/>
            <person name="Hothersall J."/>
            <person name="Stephens E."/>
            <person name="Thomas C.M."/>
            <person name="Parkhill J."/>
            <person name="Levy S.B."/>
            <person name="Rainey P.B."/>
            <person name="Thomson N.R."/>
        </authorList>
    </citation>
    <scope>NUCLEOTIDE SEQUENCE [LARGE SCALE GENOMIC DNA]</scope>
    <source>
        <strain>Pf0-1</strain>
    </source>
</reference>
<evidence type="ECO:0000255" key="1">
    <source>
        <dbReference type="HAMAP-Rule" id="MF_01632"/>
    </source>
</evidence>
<protein>
    <recommendedName>
        <fullName evidence="1">Probable chorismate pyruvate-lyase 2</fullName>
        <shortName evidence="1">CL 2</shortName>
        <shortName evidence="1">CPL 2</shortName>
        <ecNumber evidence="1">4.1.3.40</ecNumber>
    </recommendedName>
</protein>
<accession>Q3K4G4</accession>
<gene>
    <name evidence="1" type="primary">ubiC2</name>
    <name type="ordered locus">Pfl01_5603</name>
</gene>
<organism>
    <name type="scientific">Pseudomonas fluorescens (strain Pf0-1)</name>
    <dbReference type="NCBI Taxonomy" id="205922"/>
    <lineage>
        <taxon>Bacteria</taxon>
        <taxon>Pseudomonadati</taxon>
        <taxon>Pseudomonadota</taxon>
        <taxon>Gammaproteobacteria</taxon>
        <taxon>Pseudomonadales</taxon>
        <taxon>Pseudomonadaceae</taxon>
        <taxon>Pseudomonas</taxon>
    </lineage>
</organism>
<proteinExistence type="inferred from homology"/>